<name>RS2_CAMFF</name>
<evidence type="ECO:0000255" key="1">
    <source>
        <dbReference type="HAMAP-Rule" id="MF_00291"/>
    </source>
</evidence>
<evidence type="ECO:0000256" key="2">
    <source>
        <dbReference type="SAM" id="MobiDB-lite"/>
    </source>
</evidence>
<evidence type="ECO:0000305" key="3"/>
<sequence length="258" mass="29354">MVTMRDLLECGVHFGHQTRRWNPKMKKFIFGERKGIYIIDLQKTIRYFRYTYNIVRDAAAEGKTVLFVGTKKQAGVAIKEYAEKCGMPYVNHRWLGGMMTNFGTIKQSIRKLEVIEAMEEDGSINLLTKKEALMLRRKKEKLLATLGGIRNMKSLPDMVFVIDTVKEKIAVAEANKLRMPVVAPIDTNCDPDIVDFPIPGNDDAIRSVQLFCQEMAEAINEGKALRDQDEAEQVEPVSQEEKDEVVAEAMSEADFEEQ</sequence>
<feature type="chain" id="PRO_1000003920" description="Small ribosomal subunit protein uS2">
    <location>
        <begin position="1"/>
        <end position="258"/>
    </location>
</feature>
<feature type="region of interest" description="Disordered" evidence="2">
    <location>
        <begin position="222"/>
        <end position="258"/>
    </location>
</feature>
<gene>
    <name evidence="1" type="primary">rpsB</name>
    <name type="ordered locus">CFF8240_1442</name>
</gene>
<accession>A0RQU8</accession>
<comment type="similarity">
    <text evidence="1">Belongs to the universal ribosomal protein uS2 family.</text>
</comment>
<organism>
    <name type="scientific">Campylobacter fetus subsp. fetus (strain 82-40)</name>
    <dbReference type="NCBI Taxonomy" id="360106"/>
    <lineage>
        <taxon>Bacteria</taxon>
        <taxon>Pseudomonadati</taxon>
        <taxon>Campylobacterota</taxon>
        <taxon>Epsilonproteobacteria</taxon>
        <taxon>Campylobacterales</taxon>
        <taxon>Campylobacteraceae</taxon>
        <taxon>Campylobacter</taxon>
    </lineage>
</organism>
<keyword id="KW-0687">Ribonucleoprotein</keyword>
<keyword id="KW-0689">Ribosomal protein</keyword>
<reference key="1">
    <citation type="submission" date="2006-11" db="EMBL/GenBank/DDBJ databases">
        <title>Sequence of Campylobacter fetus subsp. fetus 82-40.</title>
        <authorList>
            <person name="Fouts D.E."/>
            <person name="Nelson K.E."/>
        </authorList>
    </citation>
    <scope>NUCLEOTIDE SEQUENCE [LARGE SCALE GENOMIC DNA]</scope>
    <source>
        <strain>82-40</strain>
    </source>
</reference>
<dbReference type="EMBL" id="CP000487">
    <property type="protein sequence ID" value="ABK82535.1"/>
    <property type="molecule type" value="Genomic_DNA"/>
</dbReference>
<dbReference type="RefSeq" id="WP_002850403.1">
    <property type="nucleotide sequence ID" value="NC_008599.1"/>
</dbReference>
<dbReference type="SMR" id="A0RQU8"/>
<dbReference type="GeneID" id="61065261"/>
<dbReference type="KEGG" id="cff:CFF8240_1442"/>
<dbReference type="eggNOG" id="COG0052">
    <property type="taxonomic scope" value="Bacteria"/>
</dbReference>
<dbReference type="HOGENOM" id="CLU_040318_1_2_7"/>
<dbReference type="Proteomes" id="UP000000760">
    <property type="component" value="Chromosome"/>
</dbReference>
<dbReference type="GO" id="GO:0022627">
    <property type="term" value="C:cytosolic small ribosomal subunit"/>
    <property type="evidence" value="ECO:0007669"/>
    <property type="project" value="TreeGrafter"/>
</dbReference>
<dbReference type="GO" id="GO:0003735">
    <property type="term" value="F:structural constituent of ribosome"/>
    <property type="evidence" value="ECO:0007669"/>
    <property type="project" value="InterPro"/>
</dbReference>
<dbReference type="GO" id="GO:0006412">
    <property type="term" value="P:translation"/>
    <property type="evidence" value="ECO:0007669"/>
    <property type="project" value="UniProtKB-UniRule"/>
</dbReference>
<dbReference type="CDD" id="cd01425">
    <property type="entry name" value="RPS2"/>
    <property type="match status" value="1"/>
</dbReference>
<dbReference type="FunFam" id="1.10.287.610:FF:000001">
    <property type="entry name" value="30S ribosomal protein S2"/>
    <property type="match status" value="1"/>
</dbReference>
<dbReference type="Gene3D" id="3.40.50.10490">
    <property type="entry name" value="Glucose-6-phosphate isomerase like protein, domain 1"/>
    <property type="match status" value="1"/>
</dbReference>
<dbReference type="Gene3D" id="1.10.287.610">
    <property type="entry name" value="Helix hairpin bin"/>
    <property type="match status" value="1"/>
</dbReference>
<dbReference type="HAMAP" id="MF_00291_B">
    <property type="entry name" value="Ribosomal_uS2_B"/>
    <property type="match status" value="1"/>
</dbReference>
<dbReference type="InterPro" id="IPR001865">
    <property type="entry name" value="Ribosomal_uS2"/>
</dbReference>
<dbReference type="InterPro" id="IPR005706">
    <property type="entry name" value="Ribosomal_uS2_bac/mit/plastid"/>
</dbReference>
<dbReference type="InterPro" id="IPR018130">
    <property type="entry name" value="Ribosomal_uS2_CS"/>
</dbReference>
<dbReference type="InterPro" id="IPR023591">
    <property type="entry name" value="Ribosomal_uS2_flav_dom_sf"/>
</dbReference>
<dbReference type="NCBIfam" id="TIGR01011">
    <property type="entry name" value="rpsB_bact"/>
    <property type="match status" value="1"/>
</dbReference>
<dbReference type="PANTHER" id="PTHR12534">
    <property type="entry name" value="30S RIBOSOMAL PROTEIN S2 PROKARYOTIC AND ORGANELLAR"/>
    <property type="match status" value="1"/>
</dbReference>
<dbReference type="PANTHER" id="PTHR12534:SF0">
    <property type="entry name" value="SMALL RIBOSOMAL SUBUNIT PROTEIN US2M"/>
    <property type="match status" value="1"/>
</dbReference>
<dbReference type="Pfam" id="PF00318">
    <property type="entry name" value="Ribosomal_S2"/>
    <property type="match status" value="1"/>
</dbReference>
<dbReference type="PRINTS" id="PR00395">
    <property type="entry name" value="RIBOSOMALS2"/>
</dbReference>
<dbReference type="SUPFAM" id="SSF52313">
    <property type="entry name" value="Ribosomal protein S2"/>
    <property type="match status" value="1"/>
</dbReference>
<dbReference type="PROSITE" id="PS00962">
    <property type="entry name" value="RIBOSOMAL_S2_1"/>
    <property type="match status" value="1"/>
</dbReference>
<dbReference type="PROSITE" id="PS00963">
    <property type="entry name" value="RIBOSOMAL_S2_2"/>
    <property type="match status" value="1"/>
</dbReference>
<proteinExistence type="inferred from homology"/>
<protein>
    <recommendedName>
        <fullName evidence="1">Small ribosomal subunit protein uS2</fullName>
    </recommendedName>
    <alternativeName>
        <fullName evidence="3">30S ribosomal protein S2</fullName>
    </alternativeName>
</protein>